<sequence length="907" mass="103868">MDYSLTVLLPKTDFPMKANLPQREPHWIEVWEKEKVYSTLLEKRKNCPQFILHDGPPFANGKAHMGSGLNKILKDIVLKSRNMLGFQCPYIPGWDCHGLPIEHKVMSEYPALAADPLSIRNKCKEYARYWIEIQKEQFRRLGILGSWDNPYITMDPGYEAAELRLFAELVEKKWVYRGLRPVFWSVGCRTALAEAEIEYQKKEDIAIYVEFPVGEEELKKAGLPQGTSFLAWTTTPWTLPANLALAVSPDLSYELRQVGGKKFIVAGKLAESIPGFSHSVVLLSFPSGQNLEGLKYNHPLLPREGVVYTADFVSGETGSGIVHIAPGHGMEDYQLGMVHGLEVYSPVDDQGRFTKQCGIEKIVGLSVFEANSILCAMLKEKGLLWAKYPYVHDYPFCWRSKTPIIFRSVPQWFIAIEAFKSLALKEIERVNWIPSRGENRIKGAVESRKDWCISRQRYWGVPIPAFYKKSGEAILDPSIIRRFADKVEEEGTDLWFRLESKELCQLLGLAPSEDLVKGLDTLDVWIDSGSSHYSVLKPRGEDPADLYLEGSDQHRGWFQSSLLLSVASKGKAPYKSVLTHGFVVDLDGKKLSKSSGARDLSEQIQTYGADLLRLWVASEEYAEDVPFSKEIFSRLSDSYRLIRNSLRILLGNLHDFNPQEQSLPDDRLREIDRYFELCVNKLVKKTKAFYENYEFSQVYQALTRFCSVELSSFYIDILKDRLYCDGQNWLSRRSAQTVLYRTFECLVKLLAPILPFTTEEAWRASGKTSSIHLELFPEEREIKEEEKLLKRWEKILQLRDLANRELEKARKQKMIGKNLEAKLILFTDDFEAEDTALLTEVFLVSQLEIIRSSKTEILVEKALGKKCPRCWKFSLFAQSNSDPQYPHVCPRCLKVLKGLPESFLVSD</sequence>
<organism>
    <name type="scientific">Methylacidiphilum infernorum (isolate V4)</name>
    <name type="common">Methylokorus infernorum (strain V4)</name>
    <dbReference type="NCBI Taxonomy" id="481448"/>
    <lineage>
        <taxon>Bacteria</taxon>
        <taxon>Pseudomonadati</taxon>
        <taxon>Verrucomicrobiota</taxon>
        <taxon>Methylacidiphilae</taxon>
        <taxon>Methylacidiphilales</taxon>
        <taxon>Methylacidiphilaceae</taxon>
        <taxon>Methylacidiphilum (ex Ratnadevi et al. 2023)</taxon>
    </lineage>
</organism>
<keyword id="KW-0030">Aminoacyl-tRNA synthetase</keyword>
<keyword id="KW-0067">ATP-binding</keyword>
<keyword id="KW-0963">Cytoplasm</keyword>
<keyword id="KW-0436">Ligase</keyword>
<keyword id="KW-0479">Metal-binding</keyword>
<keyword id="KW-0547">Nucleotide-binding</keyword>
<keyword id="KW-0648">Protein biosynthesis</keyword>
<keyword id="KW-0862">Zinc</keyword>
<proteinExistence type="inferred from homology"/>
<evidence type="ECO:0000255" key="1">
    <source>
        <dbReference type="HAMAP-Rule" id="MF_02002"/>
    </source>
</evidence>
<name>SYI_METI4</name>
<feature type="chain" id="PRO_1000216241" description="Isoleucine--tRNA ligase">
    <location>
        <begin position="1"/>
        <end position="907"/>
    </location>
</feature>
<feature type="short sequence motif" description="'HIGH' region">
    <location>
        <begin position="57"/>
        <end position="67"/>
    </location>
</feature>
<feature type="short sequence motif" description="'KMSKS' region">
    <location>
        <begin position="590"/>
        <end position="594"/>
    </location>
</feature>
<feature type="binding site" evidence="1">
    <location>
        <position position="549"/>
    </location>
    <ligand>
        <name>L-isoleucyl-5'-AMP</name>
        <dbReference type="ChEBI" id="CHEBI:178002"/>
    </ligand>
</feature>
<feature type="binding site" evidence="1">
    <location>
        <position position="593"/>
    </location>
    <ligand>
        <name>ATP</name>
        <dbReference type="ChEBI" id="CHEBI:30616"/>
    </ligand>
</feature>
<feature type="binding site" evidence="1">
    <location>
        <position position="867"/>
    </location>
    <ligand>
        <name>Zn(2+)</name>
        <dbReference type="ChEBI" id="CHEBI:29105"/>
    </ligand>
</feature>
<feature type="binding site" evidence="1">
    <location>
        <position position="870"/>
    </location>
    <ligand>
        <name>Zn(2+)</name>
        <dbReference type="ChEBI" id="CHEBI:29105"/>
    </ligand>
</feature>
<feature type="binding site" evidence="1">
    <location>
        <position position="889"/>
    </location>
    <ligand>
        <name>Zn(2+)</name>
        <dbReference type="ChEBI" id="CHEBI:29105"/>
    </ligand>
</feature>
<feature type="binding site" evidence="1">
    <location>
        <position position="892"/>
    </location>
    <ligand>
        <name>Zn(2+)</name>
        <dbReference type="ChEBI" id="CHEBI:29105"/>
    </ligand>
</feature>
<reference key="1">
    <citation type="journal article" date="2008" name="Biol. Direct">
        <title>Complete genome sequence of the extremely acidophilic methanotroph isolate V4, Methylacidiphilum infernorum, a representative of the bacterial phylum Verrucomicrobia.</title>
        <authorList>
            <person name="Hou S."/>
            <person name="Makarova K.S."/>
            <person name="Saw J.H."/>
            <person name="Senin P."/>
            <person name="Ly B.V."/>
            <person name="Zhou Z."/>
            <person name="Ren Y."/>
            <person name="Wang J."/>
            <person name="Galperin M.Y."/>
            <person name="Omelchenko M.V."/>
            <person name="Wolf Y.I."/>
            <person name="Yutin N."/>
            <person name="Koonin E.V."/>
            <person name="Stott M.B."/>
            <person name="Mountain B.W."/>
            <person name="Crowe M.A."/>
            <person name="Smirnova A.V."/>
            <person name="Dunfield P.F."/>
            <person name="Feng L."/>
            <person name="Wang L."/>
            <person name="Alam M."/>
        </authorList>
    </citation>
    <scope>NUCLEOTIDE SEQUENCE [LARGE SCALE GENOMIC DNA]</scope>
    <source>
        <strain>Isolate V4</strain>
    </source>
</reference>
<accession>B3DYQ6</accession>
<comment type="function">
    <text evidence="1">Catalyzes the attachment of isoleucine to tRNA(Ile). As IleRS can inadvertently accommodate and process structurally similar amino acids such as valine, to avoid such errors it has two additional distinct tRNA(Ile)-dependent editing activities. One activity is designated as 'pretransfer' editing and involves the hydrolysis of activated Val-AMP. The other activity is designated 'posttransfer' editing and involves deacylation of mischarged Val-tRNA(Ile).</text>
</comment>
<comment type="catalytic activity">
    <reaction evidence="1">
        <text>tRNA(Ile) + L-isoleucine + ATP = L-isoleucyl-tRNA(Ile) + AMP + diphosphate</text>
        <dbReference type="Rhea" id="RHEA:11060"/>
        <dbReference type="Rhea" id="RHEA-COMP:9666"/>
        <dbReference type="Rhea" id="RHEA-COMP:9695"/>
        <dbReference type="ChEBI" id="CHEBI:30616"/>
        <dbReference type="ChEBI" id="CHEBI:33019"/>
        <dbReference type="ChEBI" id="CHEBI:58045"/>
        <dbReference type="ChEBI" id="CHEBI:78442"/>
        <dbReference type="ChEBI" id="CHEBI:78528"/>
        <dbReference type="ChEBI" id="CHEBI:456215"/>
        <dbReference type="EC" id="6.1.1.5"/>
    </reaction>
</comment>
<comment type="cofactor">
    <cofactor evidence="1">
        <name>Zn(2+)</name>
        <dbReference type="ChEBI" id="CHEBI:29105"/>
    </cofactor>
    <text evidence="1">Binds 1 zinc ion per subunit.</text>
</comment>
<comment type="subunit">
    <text evidence="1">Monomer.</text>
</comment>
<comment type="subcellular location">
    <subcellularLocation>
        <location evidence="1">Cytoplasm</location>
    </subcellularLocation>
</comment>
<comment type="domain">
    <text evidence="1">IleRS has two distinct active sites: one for aminoacylation and one for editing. The misactivated valine is translocated from the active site to the editing site, which sterically excludes the correctly activated isoleucine. The single editing site contains two valyl binding pockets, one specific for each substrate (Val-AMP or Val-tRNA(Ile)).</text>
</comment>
<comment type="similarity">
    <text evidence="1">Belongs to the class-I aminoacyl-tRNA synthetase family. IleS type 1 subfamily.</text>
</comment>
<dbReference type="EC" id="6.1.1.5" evidence="1"/>
<dbReference type="EMBL" id="CP000975">
    <property type="protein sequence ID" value="ACD82428.1"/>
    <property type="molecule type" value="Genomic_DNA"/>
</dbReference>
<dbReference type="RefSeq" id="WP_012462710.1">
    <property type="nucleotide sequence ID" value="NC_010794.1"/>
</dbReference>
<dbReference type="SMR" id="B3DYQ6"/>
<dbReference type="STRING" id="481448.Minf_0370"/>
<dbReference type="KEGG" id="min:Minf_0370"/>
<dbReference type="eggNOG" id="COG0060">
    <property type="taxonomic scope" value="Bacteria"/>
</dbReference>
<dbReference type="HOGENOM" id="CLU_001493_7_0_0"/>
<dbReference type="OrthoDB" id="9810365at2"/>
<dbReference type="Proteomes" id="UP000009149">
    <property type="component" value="Chromosome"/>
</dbReference>
<dbReference type="GO" id="GO:0005829">
    <property type="term" value="C:cytosol"/>
    <property type="evidence" value="ECO:0007669"/>
    <property type="project" value="TreeGrafter"/>
</dbReference>
<dbReference type="GO" id="GO:0002161">
    <property type="term" value="F:aminoacyl-tRNA deacylase activity"/>
    <property type="evidence" value="ECO:0007669"/>
    <property type="project" value="InterPro"/>
</dbReference>
<dbReference type="GO" id="GO:0005524">
    <property type="term" value="F:ATP binding"/>
    <property type="evidence" value="ECO:0007669"/>
    <property type="project" value="UniProtKB-UniRule"/>
</dbReference>
<dbReference type="GO" id="GO:0004822">
    <property type="term" value="F:isoleucine-tRNA ligase activity"/>
    <property type="evidence" value="ECO:0007669"/>
    <property type="project" value="UniProtKB-UniRule"/>
</dbReference>
<dbReference type="GO" id="GO:0000049">
    <property type="term" value="F:tRNA binding"/>
    <property type="evidence" value="ECO:0007669"/>
    <property type="project" value="InterPro"/>
</dbReference>
<dbReference type="GO" id="GO:0008270">
    <property type="term" value="F:zinc ion binding"/>
    <property type="evidence" value="ECO:0007669"/>
    <property type="project" value="UniProtKB-UniRule"/>
</dbReference>
<dbReference type="GO" id="GO:0006428">
    <property type="term" value="P:isoleucyl-tRNA aminoacylation"/>
    <property type="evidence" value="ECO:0007669"/>
    <property type="project" value="UniProtKB-UniRule"/>
</dbReference>
<dbReference type="CDD" id="cd07960">
    <property type="entry name" value="Anticodon_Ia_Ile_BEm"/>
    <property type="match status" value="1"/>
</dbReference>
<dbReference type="CDD" id="cd00818">
    <property type="entry name" value="IleRS_core"/>
    <property type="match status" value="1"/>
</dbReference>
<dbReference type="FunFam" id="3.40.50.620:FF:000092">
    <property type="entry name" value="Isoleucine--tRNA ligase"/>
    <property type="match status" value="1"/>
</dbReference>
<dbReference type="Gene3D" id="1.10.730.20">
    <property type="match status" value="1"/>
</dbReference>
<dbReference type="Gene3D" id="3.40.50.620">
    <property type="entry name" value="HUPs"/>
    <property type="match status" value="2"/>
</dbReference>
<dbReference type="Gene3D" id="1.10.10.830">
    <property type="entry name" value="Ile-tRNA synthetase CP2 domain-like"/>
    <property type="match status" value="1"/>
</dbReference>
<dbReference type="Gene3D" id="3.90.740.10">
    <property type="entry name" value="Valyl/Leucyl/Isoleucyl-tRNA synthetase, editing domain"/>
    <property type="match status" value="1"/>
</dbReference>
<dbReference type="HAMAP" id="MF_02002">
    <property type="entry name" value="Ile_tRNA_synth_type1"/>
    <property type="match status" value="1"/>
</dbReference>
<dbReference type="InterPro" id="IPR002300">
    <property type="entry name" value="aa-tRNA-synth_Ia"/>
</dbReference>
<dbReference type="InterPro" id="IPR033708">
    <property type="entry name" value="Anticodon_Ile_BEm"/>
</dbReference>
<dbReference type="InterPro" id="IPR002301">
    <property type="entry name" value="Ile-tRNA-ligase"/>
</dbReference>
<dbReference type="InterPro" id="IPR023585">
    <property type="entry name" value="Ile-tRNA-ligase_type1"/>
</dbReference>
<dbReference type="InterPro" id="IPR050081">
    <property type="entry name" value="Ile-tRNA_ligase"/>
</dbReference>
<dbReference type="InterPro" id="IPR013155">
    <property type="entry name" value="M/V/L/I-tRNA-synth_anticd-bd"/>
</dbReference>
<dbReference type="InterPro" id="IPR014729">
    <property type="entry name" value="Rossmann-like_a/b/a_fold"/>
</dbReference>
<dbReference type="InterPro" id="IPR009080">
    <property type="entry name" value="tRNAsynth_Ia_anticodon-bd"/>
</dbReference>
<dbReference type="InterPro" id="IPR009008">
    <property type="entry name" value="Val/Leu/Ile-tRNA-synth_edit"/>
</dbReference>
<dbReference type="NCBIfam" id="TIGR00392">
    <property type="entry name" value="ileS"/>
    <property type="match status" value="1"/>
</dbReference>
<dbReference type="PANTHER" id="PTHR42765:SF1">
    <property type="entry name" value="ISOLEUCINE--TRNA LIGASE, MITOCHONDRIAL"/>
    <property type="match status" value="1"/>
</dbReference>
<dbReference type="PANTHER" id="PTHR42765">
    <property type="entry name" value="SOLEUCYL-TRNA SYNTHETASE"/>
    <property type="match status" value="1"/>
</dbReference>
<dbReference type="Pfam" id="PF08264">
    <property type="entry name" value="Anticodon_1"/>
    <property type="match status" value="1"/>
</dbReference>
<dbReference type="Pfam" id="PF00133">
    <property type="entry name" value="tRNA-synt_1"/>
    <property type="match status" value="1"/>
</dbReference>
<dbReference type="PRINTS" id="PR00984">
    <property type="entry name" value="TRNASYNTHILE"/>
</dbReference>
<dbReference type="SUPFAM" id="SSF47323">
    <property type="entry name" value="Anticodon-binding domain of a subclass of class I aminoacyl-tRNA synthetases"/>
    <property type="match status" value="1"/>
</dbReference>
<dbReference type="SUPFAM" id="SSF52374">
    <property type="entry name" value="Nucleotidylyl transferase"/>
    <property type="match status" value="1"/>
</dbReference>
<dbReference type="SUPFAM" id="SSF50677">
    <property type="entry name" value="ValRS/IleRS/LeuRS editing domain"/>
    <property type="match status" value="1"/>
</dbReference>
<gene>
    <name evidence="1" type="primary">ileS</name>
    <name type="ordered locus">Minf_0370</name>
</gene>
<protein>
    <recommendedName>
        <fullName evidence="1">Isoleucine--tRNA ligase</fullName>
        <ecNumber evidence="1">6.1.1.5</ecNumber>
    </recommendedName>
    <alternativeName>
        <fullName evidence="1">Isoleucyl-tRNA synthetase</fullName>
        <shortName evidence="1">IleRS</shortName>
    </alternativeName>
</protein>